<dbReference type="EMBL" id="CP000903">
    <property type="protein sequence ID" value="ABY45189.1"/>
    <property type="molecule type" value="Genomic_DNA"/>
</dbReference>
<dbReference type="RefSeq" id="WP_002015076.1">
    <property type="nucleotide sequence ID" value="NZ_CAKMRX030000166.1"/>
</dbReference>
<dbReference type="SMR" id="A9VGC9"/>
<dbReference type="GeneID" id="66266248"/>
<dbReference type="KEGG" id="bwe:BcerKBAB4_4027"/>
<dbReference type="eggNOG" id="COG1438">
    <property type="taxonomic scope" value="Bacteria"/>
</dbReference>
<dbReference type="HOGENOM" id="CLU_097103_3_0_9"/>
<dbReference type="UniPathway" id="UPA00068"/>
<dbReference type="Proteomes" id="UP000002154">
    <property type="component" value="Chromosome"/>
</dbReference>
<dbReference type="GO" id="GO:0005737">
    <property type="term" value="C:cytoplasm"/>
    <property type="evidence" value="ECO:0007669"/>
    <property type="project" value="UniProtKB-SubCell"/>
</dbReference>
<dbReference type="GO" id="GO:0034618">
    <property type="term" value="F:arginine binding"/>
    <property type="evidence" value="ECO:0007669"/>
    <property type="project" value="InterPro"/>
</dbReference>
<dbReference type="GO" id="GO:0003677">
    <property type="term" value="F:DNA binding"/>
    <property type="evidence" value="ECO:0007669"/>
    <property type="project" value="UniProtKB-KW"/>
</dbReference>
<dbReference type="GO" id="GO:0003700">
    <property type="term" value="F:DNA-binding transcription factor activity"/>
    <property type="evidence" value="ECO:0007669"/>
    <property type="project" value="UniProtKB-UniRule"/>
</dbReference>
<dbReference type="GO" id="GO:0006526">
    <property type="term" value="P:L-arginine biosynthetic process"/>
    <property type="evidence" value="ECO:0007669"/>
    <property type="project" value="UniProtKB-UniPathway"/>
</dbReference>
<dbReference type="GO" id="GO:0051259">
    <property type="term" value="P:protein complex oligomerization"/>
    <property type="evidence" value="ECO:0007669"/>
    <property type="project" value="InterPro"/>
</dbReference>
<dbReference type="GO" id="GO:1900079">
    <property type="term" value="P:regulation of arginine biosynthetic process"/>
    <property type="evidence" value="ECO:0007669"/>
    <property type="project" value="UniProtKB-UniRule"/>
</dbReference>
<dbReference type="FunFam" id="1.10.10.10:FF:000172">
    <property type="entry name" value="Arginine repressor"/>
    <property type="match status" value="1"/>
</dbReference>
<dbReference type="FunFam" id="3.30.1360.40:FF:000006">
    <property type="entry name" value="Arginine repressor"/>
    <property type="match status" value="1"/>
</dbReference>
<dbReference type="Gene3D" id="3.30.1360.40">
    <property type="match status" value="1"/>
</dbReference>
<dbReference type="Gene3D" id="1.10.10.10">
    <property type="entry name" value="Winged helix-like DNA-binding domain superfamily/Winged helix DNA-binding domain"/>
    <property type="match status" value="1"/>
</dbReference>
<dbReference type="HAMAP" id="MF_00173">
    <property type="entry name" value="Arg_repressor"/>
    <property type="match status" value="1"/>
</dbReference>
<dbReference type="InterPro" id="IPR001669">
    <property type="entry name" value="Arg_repress"/>
</dbReference>
<dbReference type="InterPro" id="IPR020899">
    <property type="entry name" value="Arg_repress_C"/>
</dbReference>
<dbReference type="InterPro" id="IPR036251">
    <property type="entry name" value="Arg_repress_C_sf"/>
</dbReference>
<dbReference type="InterPro" id="IPR020900">
    <property type="entry name" value="Arg_repress_DNA-bd"/>
</dbReference>
<dbReference type="InterPro" id="IPR036388">
    <property type="entry name" value="WH-like_DNA-bd_sf"/>
</dbReference>
<dbReference type="InterPro" id="IPR036390">
    <property type="entry name" value="WH_DNA-bd_sf"/>
</dbReference>
<dbReference type="NCBIfam" id="TIGR01529">
    <property type="entry name" value="argR_whole"/>
    <property type="match status" value="1"/>
</dbReference>
<dbReference type="NCBIfam" id="NF003281">
    <property type="entry name" value="PRK04280.1"/>
    <property type="match status" value="1"/>
</dbReference>
<dbReference type="PANTHER" id="PTHR34471">
    <property type="entry name" value="ARGININE REPRESSOR"/>
    <property type="match status" value="1"/>
</dbReference>
<dbReference type="PANTHER" id="PTHR34471:SF1">
    <property type="entry name" value="ARGININE REPRESSOR"/>
    <property type="match status" value="1"/>
</dbReference>
<dbReference type="Pfam" id="PF01316">
    <property type="entry name" value="Arg_repressor"/>
    <property type="match status" value="1"/>
</dbReference>
<dbReference type="Pfam" id="PF02863">
    <property type="entry name" value="Arg_repressor_C"/>
    <property type="match status" value="1"/>
</dbReference>
<dbReference type="PRINTS" id="PR01467">
    <property type="entry name" value="ARGREPRESSOR"/>
</dbReference>
<dbReference type="SUPFAM" id="SSF55252">
    <property type="entry name" value="C-terminal domain of arginine repressor"/>
    <property type="match status" value="1"/>
</dbReference>
<dbReference type="SUPFAM" id="SSF46785">
    <property type="entry name" value="Winged helix' DNA-binding domain"/>
    <property type="match status" value="1"/>
</dbReference>
<proteinExistence type="inferred from homology"/>
<reference key="1">
    <citation type="journal article" date="2008" name="Chem. Biol. Interact.">
        <title>Extending the Bacillus cereus group genomics to putative food-borne pathogens of different toxicity.</title>
        <authorList>
            <person name="Lapidus A."/>
            <person name="Goltsman E."/>
            <person name="Auger S."/>
            <person name="Galleron N."/>
            <person name="Segurens B."/>
            <person name="Dossat C."/>
            <person name="Land M.L."/>
            <person name="Broussolle V."/>
            <person name="Brillard J."/>
            <person name="Guinebretiere M.-H."/>
            <person name="Sanchis V."/>
            <person name="Nguen-the C."/>
            <person name="Lereclus D."/>
            <person name="Richardson P."/>
            <person name="Wincker P."/>
            <person name="Weissenbach J."/>
            <person name="Ehrlich S.D."/>
            <person name="Sorokin A."/>
        </authorList>
    </citation>
    <scope>NUCLEOTIDE SEQUENCE [LARGE SCALE GENOMIC DNA]</scope>
    <source>
        <strain>KBAB4</strain>
    </source>
</reference>
<protein>
    <recommendedName>
        <fullName evidence="1">Arginine repressor</fullName>
    </recommendedName>
</protein>
<comment type="function">
    <text evidence="1">Regulates arginine biosynthesis genes.</text>
</comment>
<comment type="pathway">
    <text>Amino-acid biosynthesis; L-arginine biosynthesis [regulation].</text>
</comment>
<comment type="subcellular location">
    <subcellularLocation>
        <location evidence="1">Cytoplasm</location>
    </subcellularLocation>
</comment>
<comment type="similarity">
    <text evidence="1">Belongs to the ArgR family.</text>
</comment>
<gene>
    <name evidence="1" type="primary">argR</name>
    <name type="ordered locus">BcerKBAB4_4027</name>
</gene>
<feature type="chain" id="PRO_1000097857" description="Arginine repressor">
    <location>
        <begin position="1"/>
        <end position="149"/>
    </location>
</feature>
<evidence type="ECO:0000255" key="1">
    <source>
        <dbReference type="HAMAP-Rule" id="MF_00173"/>
    </source>
</evidence>
<accession>A9VGC9</accession>
<keyword id="KW-0028">Amino-acid biosynthesis</keyword>
<keyword id="KW-0055">Arginine biosynthesis</keyword>
<keyword id="KW-0963">Cytoplasm</keyword>
<keyword id="KW-0238">DNA-binding</keyword>
<keyword id="KW-0678">Repressor</keyword>
<keyword id="KW-0804">Transcription</keyword>
<keyword id="KW-0805">Transcription regulation</keyword>
<sequence>MNKGQRHIKIREIIANKEIETQDELVDILRNVGFNVTQATVSRDIKELHLVKVPLHDGRYKYSLPADQRFNPLQKLKRNLVDSFVKLDTAGHMLVLKTLPGNAHSLGALIDHLEWDEIVGTICGDDTCLIICRTPEDTGVVSDRFLNML</sequence>
<organism>
    <name type="scientific">Bacillus mycoides (strain KBAB4)</name>
    <name type="common">Bacillus weihenstephanensis</name>
    <dbReference type="NCBI Taxonomy" id="315730"/>
    <lineage>
        <taxon>Bacteria</taxon>
        <taxon>Bacillati</taxon>
        <taxon>Bacillota</taxon>
        <taxon>Bacilli</taxon>
        <taxon>Bacillales</taxon>
        <taxon>Bacillaceae</taxon>
        <taxon>Bacillus</taxon>
        <taxon>Bacillus cereus group</taxon>
    </lineage>
</organism>
<name>ARGR_BACMK</name>